<sequence length="313" mass="33879">MNVGIKGFGAYAPEKIIDNAYFEQFLDTSDEWISKMTGIKERHWADDDQDTSDLAYEASVKAIADAGIQPEDIDMIIVATATGDMPFPTVANMLQERLGTGKVASMDQLAACSGFMYSMITAKQYVQSGDYHNILVVGADKLSKITDLTDRSTAVLFGDGAGAVIIGEVSEGRGIISYEMGSDGTGGKHLYLDKDTGKLKMNGREVFKFAVRIMGDASTRVVEKANLTSDDIDLFIPHQANIRIMESARERLGISKDKMSVSVNKYGNTSAASIPLSIDQELKNGKLKDDDTIVLVGFGGGLTWGAMTIKWGK</sequence>
<feature type="chain" id="PRO_0000110469" description="Beta-ketoacyl-[acyl-carrier-protein] synthase III">
    <location>
        <begin position="1"/>
        <end position="313"/>
    </location>
</feature>
<feature type="region of interest" description="ACP-binding" evidence="1">
    <location>
        <begin position="239"/>
        <end position="243"/>
    </location>
</feature>
<feature type="active site" evidence="1">
    <location>
        <position position="112"/>
    </location>
</feature>
<feature type="active site" evidence="1">
    <location>
        <position position="238"/>
    </location>
</feature>
<feature type="active site" evidence="1">
    <location>
        <position position="268"/>
    </location>
</feature>
<evidence type="ECO:0000255" key="1">
    <source>
        <dbReference type="HAMAP-Rule" id="MF_01815"/>
    </source>
</evidence>
<evidence type="ECO:0000269" key="2">
    <source>
    </source>
</evidence>
<evidence type="ECO:0000305" key="3"/>
<organism>
    <name type="scientific">Staphylococcus aureus (strain Mu50 / ATCC 700699)</name>
    <dbReference type="NCBI Taxonomy" id="158878"/>
    <lineage>
        <taxon>Bacteria</taxon>
        <taxon>Bacillati</taxon>
        <taxon>Bacillota</taxon>
        <taxon>Bacilli</taxon>
        <taxon>Bacillales</taxon>
        <taxon>Staphylococcaceae</taxon>
        <taxon>Staphylococcus</taxon>
    </lineage>
</organism>
<protein>
    <recommendedName>
        <fullName evidence="1">Beta-ketoacyl-[acyl-carrier-protein] synthase III</fullName>
        <shortName evidence="1">Beta-ketoacyl-ACP synthase III</shortName>
        <shortName evidence="1">KAS III</shortName>
        <ecNumber evidence="1">2.3.1.180</ecNumber>
    </recommendedName>
    <alternativeName>
        <fullName evidence="1">3-oxoacyl-[acyl-carrier-protein] synthase 3</fullName>
    </alternativeName>
    <alternativeName>
        <fullName evidence="1">3-oxoacyl-[acyl-carrier-protein] synthase III</fullName>
    </alternativeName>
    <alternativeName>
        <fullName>SaFabH</fullName>
    </alternativeName>
</protein>
<name>FABH_STAAM</name>
<dbReference type="EC" id="2.3.1.180" evidence="1"/>
<dbReference type="EMBL" id="BA000017">
    <property type="protein sequence ID" value="BAB57145.1"/>
    <property type="molecule type" value="Genomic_DNA"/>
</dbReference>
<dbReference type="RefSeq" id="WP_001100526.1">
    <property type="nucleotide sequence ID" value="NC_002758.2"/>
</dbReference>
<dbReference type="SMR" id="P68795"/>
<dbReference type="ChEMBL" id="CHEMBL3673"/>
<dbReference type="KEGG" id="sav:SAV0983"/>
<dbReference type="HOGENOM" id="CLU_039592_3_1_9"/>
<dbReference type="PhylomeDB" id="P68795"/>
<dbReference type="UniPathway" id="UPA00094"/>
<dbReference type="Proteomes" id="UP000002481">
    <property type="component" value="Chromosome"/>
</dbReference>
<dbReference type="GO" id="GO:0005737">
    <property type="term" value="C:cytoplasm"/>
    <property type="evidence" value="ECO:0007669"/>
    <property type="project" value="UniProtKB-SubCell"/>
</dbReference>
<dbReference type="GO" id="GO:0004315">
    <property type="term" value="F:3-oxoacyl-[acyl-carrier-protein] synthase activity"/>
    <property type="evidence" value="ECO:0007669"/>
    <property type="project" value="InterPro"/>
</dbReference>
<dbReference type="GO" id="GO:0033818">
    <property type="term" value="F:beta-ketoacyl-acyl-carrier-protein synthase III activity"/>
    <property type="evidence" value="ECO:0007669"/>
    <property type="project" value="UniProtKB-UniRule"/>
</dbReference>
<dbReference type="GO" id="GO:0006633">
    <property type="term" value="P:fatty acid biosynthetic process"/>
    <property type="evidence" value="ECO:0007669"/>
    <property type="project" value="UniProtKB-UniRule"/>
</dbReference>
<dbReference type="CDD" id="cd00830">
    <property type="entry name" value="KAS_III"/>
    <property type="match status" value="1"/>
</dbReference>
<dbReference type="FunFam" id="3.40.47.10:FF:000004">
    <property type="entry name" value="3-oxoacyl-[acyl-carrier-protein] synthase 3"/>
    <property type="match status" value="1"/>
</dbReference>
<dbReference type="Gene3D" id="3.40.47.10">
    <property type="match status" value="2"/>
</dbReference>
<dbReference type="HAMAP" id="MF_01815">
    <property type="entry name" value="FabH"/>
    <property type="match status" value="1"/>
</dbReference>
<dbReference type="InterPro" id="IPR013747">
    <property type="entry name" value="ACP_syn_III_C"/>
</dbReference>
<dbReference type="InterPro" id="IPR013751">
    <property type="entry name" value="ACP_syn_III_N"/>
</dbReference>
<dbReference type="InterPro" id="IPR004655">
    <property type="entry name" value="FabH"/>
</dbReference>
<dbReference type="InterPro" id="IPR016039">
    <property type="entry name" value="Thiolase-like"/>
</dbReference>
<dbReference type="NCBIfam" id="TIGR00747">
    <property type="entry name" value="fabH"/>
    <property type="match status" value="1"/>
</dbReference>
<dbReference type="NCBIfam" id="NF006829">
    <property type="entry name" value="PRK09352.1"/>
    <property type="match status" value="1"/>
</dbReference>
<dbReference type="PANTHER" id="PTHR43091">
    <property type="entry name" value="3-OXOACYL-[ACYL-CARRIER-PROTEIN] SYNTHASE"/>
    <property type="match status" value="1"/>
</dbReference>
<dbReference type="PANTHER" id="PTHR43091:SF1">
    <property type="entry name" value="BETA-KETOACYL-[ACYL-CARRIER-PROTEIN] SYNTHASE III, CHLOROPLASTIC"/>
    <property type="match status" value="1"/>
</dbReference>
<dbReference type="Pfam" id="PF08545">
    <property type="entry name" value="ACP_syn_III"/>
    <property type="match status" value="1"/>
</dbReference>
<dbReference type="Pfam" id="PF08541">
    <property type="entry name" value="ACP_syn_III_C"/>
    <property type="match status" value="1"/>
</dbReference>
<dbReference type="SUPFAM" id="SSF53901">
    <property type="entry name" value="Thiolase-like"/>
    <property type="match status" value="1"/>
</dbReference>
<gene>
    <name evidence="1" type="primary">fabH</name>
    <name type="ordered locus">SAV0983</name>
</gene>
<proteinExistence type="inferred from homology"/>
<accession>P68795</accession>
<accession>Q99VA7</accession>
<keyword id="KW-0012">Acyltransferase</keyword>
<keyword id="KW-0963">Cytoplasm</keyword>
<keyword id="KW-0275">Fatty acid biosynthesis</keyword>
<keyword id="KW-0276">Fatty acid metabolism</keyword>
<keyword id="KW-0444">Lipid biosynthesis</keyword>
<keyword id="KW-0443">Lipid metabolism</keyword>
<keyword id="KW-0511">Multifunctional enzyme</keyword>
<keyword id="KW-0808">Transferase</keyword>
<comment type="function">
    <text evidence="2">Catalyzes the condensation reaction of fatty acid synthesis by the addition to an acyl acceptor of two carbons from malonyl-ACP. Catalyzes the first condensation reaction which initiates fatty acid synthesis and may therefore play a role in governing the total rate of fatty acid production. Possesses both acetoacetyl-ACP synthase and acetyl transacylase activities. Has some substrate preference for butyryl- and isobutyryl-CoA. Its substrate specificity determines the biosynthesis of branched-chain of fatty acids.</text>
</comment>
<comment type="catalytic activity">
    <reaction evidence="1">
        <text>malonyl-[ACP] + acetyl-CoA + H(+) = 3-oxobutanoyl-[ACP] + CO2 + CoA</text>
        <dbReference type="Rhea" id="RHEA:12080"/>
        <dbReference type="Rhea" id="RHEA-COMP:9623"/>
        <dbReference type="Rhea" id="RHEA-COMP:9625"/>
        <dbReference type="ChEBI" id="CHEBI:15378"/>
        <dbReference type="ChEBI" id="CHEBI:16526"/>
        <dbReference type="ChEBI" id="CHEBI:57287"/>
        <dbReference type="ChEBI" id="CHEBI:57288"/>
        <dbReference type="ChEBI" id="CHEBI:78449"/>
        <dbReference type="ChEBI" id="CHEBI:78450"/>
        <dbReference type="EC" id="2.3.1.180"/>
    </reaction>
</comment>
<comment type="pathway">
    <text evidence="1">Lipid metabolism; fatty acid biosynthesis.</text>
</comment>
<comment type="subunit">
    <text evidence="1">Homodimer.</text>
</comment>
<comment type="subcellular location">
    <subcellularLocation>
        <location evidence="1 3">Cytoplasm</location>
    </subcellularLocation>
</comment>
<comment type="domain">
    <text evidence="1">The last Arg residue of the ACP-binding site is essential for the weak association between ACP/AcpP and FabH.</text>
</comment>
<comment type="miscellaneous">
    <text>Inhibited by the HR12 (5-chloro-4-phenyl-[1,2]-dithiol-3-one) and HR19 (4-phenyl-5-phenylimino-[1,2,4]dithiazolidin-3-one) antibiotics. Weakly inhibited by thiolactomycin.</text>
</comment>
<comment type="similarity">
    <text evidence="1 3">Belongs to the thiolase-like superfamily. FabH family.</text>
</comment>
<reference key="1">
    <citation type="journal article" date="2001" name="Lancet">
        <title>Whole genome sequencing of meticillin-resistant Staphylococcus aureus.</title>
        <authorList>
            <person name="Kuroda M."/>
            <person name="Ohta T."/>
            <person name="Uchiyama I."/>
            <person name="Baba T."/>
            <person name="Yuzawa H."/>
            <person name="Kobayashi I."/>
            <person name="Cui L."/>
            <person name="Oguchi A."/>
            <person name="Aoki K."/>
            <person name="Nagai Y."/>
            <person name="Lian J.-Q."/>
            <person name="Ito T."/>
            <person name="Kanamori M."/>
            <person name="Matsumaru H."/>
            <person name="Maruyama A."/>
            <person name="Murakami H."/>
            <person name="Hosoyama A."/>
            <person name="Mizutani-Ui Y."/>
            <person name="Takahashi N.K."/>
            <person name="Sawano T."/>
            <person name="Inoue R."/>
            <person name="Kaito C."/>
            <person name="Sekimizu K."/>
            <person name="Hirakawa H."/>
            <person name="Kuhara S."/>
            <person name="Goto S."/>
            <person name="Yabuzaki J."/>
            <person name="Kanehisa M."/>
            <person name="Yamashita A."/>
            <person name="Oshima K."/>
            <person name="Furuya K."/>
            <person name="Yoshino C."/>
            <person name="Shiba T."/>
            <person name="Hattori M."/>
            <person name="Ogasawara N."/>
            <person name="Hayashi H."/>
            <person name="Hiramatsu K."/>
        </authorList>
    </citation>
    <scope>NUCLEOTIDE SEQUENCE [LARGE SCALE GENOMIC DNA]</scope>
    <source>
        <strain>Mu50 / ATCC 700699</strain>
    </source>
</reference>
<reference key="2">
    <citation type="journal article" date="2002" name="Antimicrob. Agents Chemother.">
        <title>Purification, characterization, and identification of novel inhibitors of the beta-ketoacyl-acyl carrier protein synthase III (FabH) from Staphylococcus aureus.</title>
        <authorList>
            <person name="He X."/>
            <person name="Reynolds K.A."/>
        </authorList>
    </citation>
    <scope>FUNCTION</scope>
    <scope>HOMODIMERIZATION</scope>
    <scope>SUBSTRATE SPECIFICITY</scope>
</reference>